<organism evidence="6">
    <name type="scientific">Rattus norvegicus</name>
    <name type="common">Rat</name>
    <dbReference type="NCBI Taxonomy" id="10116"/>
    <lineage>
        <taxon>Eukaryota</taxon>
        <taxon>Metazoa</taxon>
        <taxon>Chordata</taxon>
        <taxon>Craniata</taxon>
        <taxon>Vertebrata</taxon>
        <taxon>Euteleostomi</taxon>
        <taxon>Mammalia</taxon>
        <taxon>Eutheria</taxon>
        <taxon>Euarchontoglires</taxon>
        <taxon>Glires</taxon>
        <taxon>Rodentia</taxon>
        <taxon>Myomorpha</taxon>
        <taxon>Muroidea</taxon>
        <taxon>Muridae</taxon>
        <taxon>Murinae</taxon>
        <taxon>Rattus</taxon>
    </lineage>
</organism>
<protein>
    <recommendedName>
        <fullName evidence="4">2-amino-3-carboxymuconate-6-semialdehyde decarboxylase</fullName>
        <ecNumber evidence="2">4.1.1.45</ecNumber>
    </recommendedName>
    <alternativeName>
        <fullName>Picolinate carboxylase</fullName>
    </alternativeName>
</protein>
<name>ACMSD_RAT</name>
<reference evidence="4" key="1">
    <citation type="journal article" date="2002" name="Biochem. J.">
        <title>Purification and molecular cloning of rat 2-amino-3-carboxymuconate-6-semialdehyde decarboxylase.</title>
        <authorList>
            <person name="Tanabe A."/>
            <person name="Egashira Y."/>
            <person name="Fukuoka S."/>
            <person name="Shibata K."/>
            <person name="Sanada H."/>
        </authorList>
    </citation>
    <scope>NUCLEOTIDE SEQUENCE [MRNA]</scope>
    <scope>PROTEIN SEQUENCE OF 1-20 AND 136-152</scope>
    <scope>TISSUE SPECIFICITY</scope>
    <scope>CATALYTIC ACTIVITY</scope>
    <scope>BIOPHYSICOCHEMICAL PROPERTIES</scope>
    <source>
        <strain evidence="6">Wistar</strain>
        <tissue evidence="6">Liver</tissue>
    </source>
</reference>
<reference evidence="4" key="2">
    <citation type="journal article" date="2002" name="J. Biol. Chem.">
        <title>Identification and expression of a cDNA encoding human alpha-amino-beta-carboxymuconate-epsilon-semialdehyde decarboxylase (ACMSD). A key enzyme for the tryptophan-niacine pathway and 'quinolinate hypothesis'.</title>
        <authorList>
            <person name="Fukuoka S."/>
            <person name="Ishiguro K."/>
            <person name="Yanagihara K."/>
            <person name="Tanabe A."/>
            <person name="Egashira Y."/>
            <person name="Sanada H."/>
            <person name="Shibata K."/>
        </authorList>
    </citation>
    <scope>TISSUE SPECIFICITY</scope>
</reference>
<evidence type="ECO:0000250" key="1"/>
<evidence type="ECO:0000269" key="2">
    <source>
    </source>
</evidence>
<evidence type="ECO:0000269" key="3">
    <source>
    </source>
</evidence>
<evidence type="ECO:0000305" key="4"/>
<evidence type="ECO:0000305" key="5">
    <source>
    </source>
</evidence>
<evidence type="ECO:0000312" key="6">
    <source>
        <dbReference type="EMBL" id="BAB84692.1"/>
    </source>
</evidence>
<evidence type="ECO:0000312" key="7">
    <source>
        <dbReference type="RGD" id="620868"/>
    </source>
</evidence>
<comment type="function">
    <text>Converts alpha-amino-beta-carboxymuconate-epsilon-semialdehyde (ACMS) to alpha-aminomuconate semialdehyde (AMS). ACMS can be converted non-enzymatically to quinolate (QA), a key precursor of NAD, and a potent endogenous excitotoxin of neuronal cells which is implicated in the pathogenesis of various neurodegenerative disorders. In the presence of ACMSD, ACMS is converted to AMS, a benign catabolite. ACMSD ultimately controls the metabolic fate of tryptophan catabolism along the kynurenine pathway.</text>
</comment>
<comment type="catalytic activity">
    <reaction evidence="2">
        <text>2-amino-3-carboxymuconate 6-semialdehyde + H(+) = 2-aminomuconate 6-semialdehyde + CO2</text>
        <dbReference type="Rhea" id="RHEA:16557"/>
        <dbReference type="ChEBI" id="CHEBI:15378"/>
        <dbReference type="ChEBI" id="CHEBI:16526"/>
        <dbReference type="ChEBI" id="CHEBI:77634"/>
        <dbReference type="ChEBI" id="CHEBI:77803"/>
        <dbReference type="EC" id="4.1.1.45"/>
    </reaction>
    <physiologicalReaction direction="left-to-right" evidence="5">
        <dbReference type="Rhea" id="RHEA:16558"/>
    </physiologicalReaction>
</comment>
<comment type="biophysicochemical properties">
    <phDependence>
        <text evidence="2">Optimum pH is 6.</text>
    </phDependence>
    <temperatureDependence>
        <text evidence="2">Optimum temperature is 40 degrees Celsius.</text>
    </temperatureDependence>
</comment>
<comment type="pathway">
    <text evidence="5">Secondary metabolite metabolism; quinolate metabolism.</text>
</comment>
<comment type="subunit">
    <text evidence="1">Monomer.</text>
</comment>
<comment type="tissue specificity">
    <text evidence="2 3">Liver and kidney. Very low levels detected in brain.</text>
</comment>
<comment type="similarity">
    <text evidence="4">Belongs to the metallo-dependent hydrolases superfamily. ACMSD family.</text>
</comment>
<proteinExistence type="evidence at protein level"/>
<dbReference type="EC" id="4.1.1.45" evidence="2"/>
<dbReference type="EMBL" id="AB069781">
    <property type="protein sequence ID" value="BAB84692.1"/>
    <property type="molecule type" value="mRNA"/>
</dbReference>
<dbReference type="RefSeq" id="NP_599199.1">
    <property type="nucleotide sequence ID" value="NM_134372.2"/>
</dbReference>
<dbReference type="SMR" id="Q8R5M5"/>
<dbReference type="FunCoup" id="Q8R5M5">
    <property type="interactions" value="24"/>
</dbReference>
<dbReference type="STRING" id="10116.ENSRNOP00000005206"/>
<dbReference type="iPTMnet" id="Q8R5M5"/>
<dbReference type="PhosphoSitePlus" id="Q8R5M5"/>
<dbReference type="PaxDb" id="10116-ENSRNOP00000005206"/>
<dbReference type="DNASU" id="171385"/>
<dbReference type="Ensembl" id="ENSRNOT00000109111.1">
    <property type="protein sequence ID" value="ENSRNOP00000081182.1"/>
    <property type="gene ID" value="ENSRNOG00000003884.7"/>
</dbReference>
<dbReference type="GeneID" id="171385"/>
<dbReference type="KEGG" id="rno:171385"/>
<dbReference type="UCSC" id="RGD:620868">
    <property type="organism name" value="rat"/>
</dbReference>
<dbReference type="AGR" id="RGD:620868"/>
<dbReference type="CTD" id="130013"/>
<dbReference type="RGD" id="620868">
    <property type="gene designation" value="Acmsd"/>
</dbReference>
<dbReference type="eggNOG" id="KOG4245">
    <property type="taxonomic scope" value="Eukaryota"/>
</dbReference>
<dbReference type="GeneTree" id="ENSGT00490000043417"/>
<dbReference type="InParanoid" id="Q8R5M5"/>
<dbReference type="OrthoDB" id="191270at2759"/>
<dbReference type="PhylomeDB" id="Q8R5M5"/>
<dbReference type="BRENDA" id="4.1.1.45">
    <property type="organism ID" value="5301"/>
</dbReference>
<dbReference type="UniPathway" id="UPA00270"/>
<dbReference type="PRO" id="PR:Q8R5M5"/>
<dbReference type="Proteomes" id="UP000002494">
    <property type="component" value="Chromosome 13"/>
</dbReference>
<dbReference type="GO" id="GO:0005737">
    <property type="term" value="C:cytoplasm"/>
    <property type="evidence" value="ECO:0000318"/>
    <property type="project" value="GO_Central"/>
</dbReference>
<dbReference type="GO" id="GO:0005829">
    <property type="term" value="C:cytosol"/>
    <property type="evidence" value="ECO:0000250"/>
    <property type="project" value="UniProtKB"/>
</dbReference>
<dbReference type="GO" id="GO:0001760">
    <property type="term" value="F:aminocarboxymuconate-semialdehyde decarboxylase activity"/>
    <property type="evidence" value="ECO:0000314"/>
    <property type="project" value="RGD"/>
</dbReference>
<dbReference type="GO" id="GO:0016787">
    <property type="term" value="F:hydrolase activity"/>
    <property type="evidence" value="ECO:0007669"/>
    <property type="project" value="InterPro"/>
</dbReference>
<dbReference type="GO" id="GO:0008270">
    <property type="term" value="F:zinc ion binding"/>
    <property type="evidence" value="ECO:0000266"/>
    <property type="project" value="RGD"/>
</dbReference>
<dbReference type="GO" id="GO:0006569">
    <property type="term" value="P:L-tryptophan catabolic process"/>
    <property type="evidence" value="ECO:0000314"/>
    <property type="project" value="RGD"/>
</dbReference>
<dbReference type="GO" id="GO:1904985">
    <property type="term" value="P:negative regulation of quinolinate biosynthetic process"/>
    <property type="evidence" value="ECO:0000250"/>
    <property type="project" value="UniProtKB"/>
</dbReference>
<dbReference type="GO" id="GO:0019748">
    <property type="term" value="P:secondary metabolic process"/>
    <property type="evidence" value="ECO:0000318"/>
    <property type="project" value="GO_Central"/>
</dbReference>
<dbReference type="FunFam" id="3.20.20.140:FF:000029">
    <property type="entry name" value="2-amino-3-carboxymuconate-6-semialdehyde decarboxylase"/>
    <property type="match status" value="1"/>
</dbReference>
<dbReference type="Gene3D" id="3.20.20.140">
    <property type="entry name" value="Metal-dependent hydrolases"/>
    <property type="match status" value="1"/>
</dbReference>
<dbReference type="InterPro" id="IPR032465">
    <property type="entry name" value="ACMSD"/>
</dbReference>
<dbReference type="InterPro" id="IPR006680">
    <property type="entry name" value="Amidohydro-rel"/>
</dbReference>
<dbReference type="InterPro" id="IPR032466">
    <property type="entry name" value="Metal_Hydrolase"/>
</dbReference>
<dbReference type="PANTHER" id="PTHR21240">
    <property type="entry name" value="2-AMINO-3-CARBOXYLMUCONATE-6-SEMIALDEHYDE DECARBOXYLASE"/>
    <property type="match status" value="1"/>
</dbReference>
<dbReference type="PANTHER" id="PTHR21240:SF27">
    <property type="entry name" value="2-AMINO-3-CARBOXYMUCONATE-6-SEMIALDEHYDE DECARBOXYLASE"/>
    <property type="match status" value="1"/>
</dbReference>
<dbReference type="Pfam" id="PF04909">
    <property type="entry name" value="Amidohydro_2"/>
    <property type="match status" value="1"/>
</dbReference>
<dbReference type="SUPFAM" id="SSF51556">
    <property type="entry name" value="Metallo-dependent hydrolases"/>
    <property type="match status" value="1"/>
</dbReference>
<sequence length="336" mass="38091">MKIDIHTHILPKEWPDLEKRFGYGGWVQLQQQGKGEAKMMKDGKVFRVIQQNCWDPEVRIREMNQKGVTVQALSTVPVMFSYWAKPKDTLELCQFLNNDLAATVARYPRRFVGLGTLPMQAPGLAVEEMERCVKELGFPGIQIGSHINMWDLNDPELFPIYTAAERLNCSLFVHPWDMQMDGRMAKYWLPWLVGMPSETTTAICSMIMGGVFEKFPKLKVCFAHGGGAFPFTIGRIAHGFNMRPDLCARDNSSDPRKYLGSFYTDSLVHDPLSLKLLTDVIGKDRVILGTDYPFPLGEQEPGKLIESMADFDEETKDKLTAGNALTFLGLERKLFE</sequence>
<feature type="chain" id="PRO_0000190982" description="2-amino-3-carboxymuconate-6-semialdehyde decarboxylase">
    <location>
        <begin position="1"/>
        <end position="336"/>
    </location>
</feature>
<feature type="binding site" evidence="1">
    <location>
        <position position="6"/>
    </location>
    <ligand>
        <name>Zn(2+)</name>
        <dbReference type="ChEBI" id="CHEBI:29105"/>
    </ligand>
</feature>
<feature type="binding site" evidence="1">
    <location>
        <position position="8"/>
    </location>
    <ligand>
        <name>Zn(2+)</name>
        <dbReference type="ChEBI" id="CHEBI:29105"/>
    </ligand>
</feature>
<feature type="binding site" evidence="1">
    <location>
        <position position="47"/>
    </location>
    <ligand>
        <name>substrate</name>
    </ligand>
</feature>
<feature type="binding site" evidence="1">
    <location>
        <position position="174"/>
    </location>
    <ligand>
        <name>Zn(2+)</name>
        <dbReference type="ChEBI" id="CHEBI:29105"/>
    </ligand>
</feature>
<feature type="binding site" evidence="1">
    <location>
        <position position="291"/>
    </location>
    <ligand>
        <name>Zn(2+)</name>
        <dbReference type="ChEBI" id="CHEBI:29105"/>
    </ligand>
</feature>
<accession>Q8R5M5</accession>
<keyword id="KW-0210">Decarboxylase</keyword>
<keyword id="KW-0903">Direct protein sequencing</keyword>
<keyword id="KW-0456">Lyase</keyword>
<keyword id="KW-0479">Metal-binding</keyword>
<keyword id="KW-1185">Reference proteome</keyword>
<keyword id="KW-0862">Zinc</keyword>
<gene>
    <name evidence="7" type="primary">Acmsd</name>
</gene>